<evidence type="ECO:0000250" key="1"/>
<evidence type="ECO:0000305" key="2"/>
<accession>P0CY30</accession>
<accession>O14462</accession>
<accession>Q5A994</accession>
<proteinExistence type="inferred from homology"/>
<organism>
    <name type="scientific">Candida albicans</name>
    <name type="common">Yeast</name>
    <dbReference type="NCBI Taxonomy" id="5476"/>
    <lineage>
        <taxon>Eukaryota</taxon>
        <taxon>Fungi</taxon>
        <taxon>Dikarya</taxon>
        <taxon>Ascomycota</taxon>
        <taxon>Saccharomycotina</taxon>
        <taxon>Pichiomycetes</taxon>
        <taxon>Debaryomycetaceae</taxon>
        <taxon>Candida/Lodderomyces clade</taxon>
        <taxon>Candida</taxon>
    </lineage>
</organism>
<reference key="1">
    <citation type="submission" date="1998-11" db="EMBL/GenBank/DDBJ databases">
        <title>Candida albicans strain 1161 genome pilot sequencing project.</title>
        <authorList>
            <person name="Murphy L."/>
            <person name="Harris D."/>
            <person name="Barrell B.G."/>
            <person name="Rajandream M.A."/>
        </authorList>
    </citation>
    <scope>NUCLEOTIDE SEQUENCE [LARGE SCALE GENOMIC DNA]</scope>
    <source>
        <strain>1161</strain>
    </source>
</reference>
<sequence>MSGKGTSSRAYDMIMKLLLVGDSGVGKSCLLLRFVEDKFNPSFITTIGIDFKIRTIESKGKRIKLQVWDTAGQERFRTITTAYYRGAMGIVLIYDVTDSRSFENVENWFQTVTQHANEDAQIFLVGNKCDDEVNRQVSKEQGQELAAKLNVPFLEASAKSNENVDSIFYELASIIQEKHVEENIGGVGGASGAGGIDVSQNNSGAKNNCC</sequence>
<gene>
    <name type="primary">SEC4</name>
</gene>
<name>SEC4_CANAX</name>
<keyword id="KW-1003">Cell membrane</keyword>
<keyword id="KW-0968">Cytoplasmic vesicle</keyword>
<keyword id="KW-0268">Exocytosis</keyword>
<keyword id="KW-0342">GTP-binding</keyword>
<keyword id="KW-0449">Lipoprotein</keyword>
<keyword id="KW-0472">Membrane</keyword>
<keyword id="KW-0547">Nucleotide-binding</keyword>
<keyword id="KW-0636">Prenylation</keyword>
<keyword id="KW-0653">Protein transport</keyword>
<keyword id="KW-0813">Transport</keyword>
<dbReference type="EMBL" id="AL033503">
    <property type="protein sequence ID" value="CAA22013.1"/>
    <property type="molecule type" value="Genomic_DNA"/>
</dbReference>
<dbReference type="PIR" id="T18242">
    <property type="entry name" value="T18242"/>
</dbReference>
<dbReference type="SMR" id="P0CY30"/>
<dbReference type="EnsemblFungi" id="CR_01750C_A-T">
    <property type="protein sequence ID" value="CR_01750C_A-T-p1"/>
    <property type="gene ID" value="CR_01750C_A"/>
</dbReference>
<dbReference type="VEuPathDB" id="FungiDB:CAWG_01525"/>
<dbReference type="VEuPathDB" id="FungiDB:CR_01750C_A"/>
<dbReference type="OMA" id="SKMEQNE"/>
<dbReference type="PhylomeDB" id="P0CY30"/>
<dbReference type="GO" id="GO:0000131">
    <property type="term" value="C:incipient cellular bud site"/>
    <property type="evidence" value="ECO:0007669"/>
    <property type="project" value="EnsemblFungi"/>
</dbReference>
<dbReference type="GO" id="GO:0043332">
    <property type="term" value="C:mating projection tip"/>
    <property type="evidence" value="ECO:0007669"/>
    <property type="project" value="EnsemblFungi"/>
</dbReference>
<dbReference type="GO" id="GO:0005886">
    <property type="term" value="C:plasma membrane"/>
    <property type="evidence" value="ECO:0007669"/>
    <property type="project" value="UniProtKB-SubCell"/>
</dbReference>
<dbReference type="GO" id="GO:0030658">
    <property type="term" value="C:transport vesicle membrane"/>
    <property type="evidence" value="ECO:0007669"/>
    <property type="project" value="UniProtKB-SubCell"/>
</dbReference>
<dbReference type="GO" id="GO:0005525">
    <property type="term" value="F:GTP binding"/>
    <property type="evidence" value="ECO:0007669"/>
    <property type="project" value="UniProtKB-KW"/>
</dbReference>
<dbReference type="GO" id="GO:0003924">
    <property type="term" value="F:GTPase activity"/>
    <property type="evidence" value="ECO:0007669"/>
    <property type="project" value="EnsemblFungi"/>
</dbReference>
<dbReference type="GO" id="GO:0031321">
    <property type="term" value="P:ascospore-type prospore assembly"/>
    <property type="evidence" value="ECO:0007669"/>
    <property type="project" value="EnsemblFungi"/>
</dbReference>
<dbReference type="GO" id="GO:0006914">
    <property type="term" value="P:autophagy"/>
    <property type="evidence" value="ECO:0007669"/>
    <property type="project" value="EnsemblFungi"/>
</dbReference>
<dbReference type="GO" id="GO:0006887">
    <property type="term" value="P:exocytosis"/>
    <property type="evidence" value="ECO:0007669"/>
    <property type="project" value="UniProtKB-KW"/>
</dbReference>
<dbReference type="GO" id="GO:0006893">
    <property type="term" value="P:Golgi to plasma membrane transport"/>
    <property type="evidence" value="ECO:0007669"/>
    <property type="project" value="EnsemblFungi"/>
</dbReference>
<dbReference type="GO" id="GO:0007107">
    <property type="term" value="P:membrane addition at site of cytokinesis"/>
    <property type="evidence" value="ECO:0007669"/>
    <property type="project" value="EnsemblFungi"/>
</dbReference>
<dbReference type="GO" id="GO:0015031">
    <property type="term" value="P:protein transport"/>
    <property type="evidence" value="ECO:0007669"/>
    <property type="project" value="UniProtKB-KW"/>
</dbReference>
<dbReference type="GO" id="GO:0006906">
    <property type="term" value="P:vesicle fusion"/>
    <property type="evidence" value="ECO:0007669"/>
    <property type="project" value="EnsemblFungi"/>
</dbReference>
<dbReference type="CDD" id="cd01867">
    <property type="entry name" value="Rab8_Rab10_Rab13_like"/>
    <property type="match status" value="1"/>
</dbReference>
<dbReference type="FunFam" id="3.40.50.300:FF:000961">
    <property type="entry name" value="Ras-related protein Rab-8B"/>
    <property type="match status" value="1"/>
</dbReference>
<dbReference type="Gene3D" id="3.40.50.300">
    <property type="entry name" value="P-loop containing nucleotide triphosphate hydrolases"/>
    <property type="match status" value="1"/>
</dbReference>
<dbReference type="InterPro" id="IPR027417">
    <property type="entry name" value="P-loop_NTPase"/>
</dbReference>
<dbReference type="InterPro" id="IPR005225">
    <property type="entry name" value="Small_GTP-bd"/>
</dbReference>
<dbReference type="InterPro" id="IPR001806">
    <property type="entry name" value="Small_GTPase"/>
</dbReference>
<dbReference type="InterPro" id="IPR050305">
    <property type="entry name" value="Small_GTPase_Rab"/>
</dbReference>
<dbReference type="NCBIfam" id="TIGR00231">
    <property type="entry name" value="small_GTP"/>
    <property type="match status" value="1"/>
</dbReference>
<dbReference type="PANTHER" id="PTHR47980">
    <property type="entry name" value="LD44762P"/>
    <property type="match status" value="1"/>
</dbReference>
<dbReference type="Pfam" id="PF00071">
    <property type="entry name" value="Ras"/>
    <property type="match status" value="1"/>
</dbReference>
<dbReference type="PRINTS" id="PR00449">
    <property type="entry name" value="RASTRNSFRMNG"/>
</dbReference>
<dbReference type="SMART" id="SM00177">
    <property type="entry name" value="ARF"/>
    <property type="match status" value="1"/>
</dbReference>
<dbReference type="SMART" id="SM00175">
    <property type="entry name" value="RAB"/>
    <property type="match status" value="1"/>
</dbReference>
<dbReference type="SMART" id="SM00176">
    <property type="entry name" value="RAN"/>
    <property type="match status" value="1"/>
</dbReference>
<dbReference type="SMART" id="SM00173">
    <property type="entry name" value="RAS"/>
    <property type="match status" value="1"/>
</dbReference>
<dbReference type="SMART" id="SM00174">
    <property type="entry name" value="RHO"/>
    <property type="match status" value="1"/>
</dbReference>
<dbReference type="SUPFAM" id="SSF52540">
    <property type="entry name" value="P-loop containing nucleoside triphosphate hydrolases"/>
    <property type="match status" value="1"/>
</dbReference>
<dbReference type="PROSITE" id="PS51419">
    <property type="entry name" value="RAB"/>
    <property type="match status" value="1"/>
</dbReference>
<protein>
    <recommendedName>
        <fullName>Ras-related protein SEC4</fullName>
    </recommendedName>
</protein>
<feature type="chain" id="PRO_0000121328" description="Ras-related protein SEC4">
    <location>
        <begin position="1"/>
        <end position="210"/>
    </location>
</feature>
<feature type="short sequence motif" description="Effector region" evidence="2">
    <location>
        <begin position="43"/>
        <end position="51"/>
    </location>
</feature>
<feature type="binding site" evidence="1">
    <location>
        <begin position="21"/>
        <end position="28"/>
    </location>
    <ligand>
        <name>GTP</name>
        <dbReference type="ChEBI" id="CHEBI:37565"/>
    </ligand>
</feature>
<feature type="binding site" evidence="1">
    <location>
        <begin position="69"/>
        <end position="73"/>
    </location>
    <ligand>
        <name>GTP</name>
        <dbReference type="ChEBI" id="CHEBI:37565"/>
    </ligand>
</feature>
<feature type="binding site" evidence="1">
    <location>
        <begin position="127"/>
        <end position="130"/>
    </location>
    <ligand>
        <name>GTP</name>
        <dbReference type="ChEBI" id="CHEBI:37565"/>
    </ligand>
</feature>
<feature type="lipid moiety-binding region" description="S-geranylgeranyl cysteine" evidence="1">
    <location>
        <position position="209"/>
    </location>
</feature>
<feature type="lipid moiety-binding region" description="S-geranylgeranyl cysteine" evidence="1">
    <location>
        <position position="210"/>
    </location>
</feature>
<comment type="function">
    <text evidence="1">Involved in exocytosis. Maybe by regulating the binding and fusion of secretory vesicles with the cell surface. The GTP-bound form of SEC4 may interact with an effector, thereby stimulating its activity and leading to exocytotic fusion. SEC4 may be an upstream activator of the 19.5S SEC8/SEC15 particle. SEC4 probably interacts directly with SEC8; it could serve as the attachment site for the SEC8/SEC15 particle (By similarity).</text>
</comment>
<comment type="subcellular location">
    <subcellularLocation>
        <location evidence="1">Cytoplasmic vesicle</location>
        <location evidence="1">Secretory vesicle membrane</location>
        <topology evidence="1">Lipid-anchor</topology>
        <orientation evidence="1">Cytoplasmic side</orientation>
    </subcellularLocation>
    <subcellularLocation>
        <location evidence="1">Cell membrane</location>
        <topology evidence="1">Lipid-anchor</topology>
        <orientation evidence="1">Cytoplasmic side</orientation>
    </subcellularLocation>
</comment>
<comment type="similarity">
    <text evidence="2">Belongs to the small GTPase superfamily. Rab family.</text>
</comment>